<evidence type="ECO:0000255" key="1"/>
<evidence type="ECO:0000305" key="2"/>
<name>FLAE_VIBCH</name>
<gene>
    <name type="primary">flaE</name>
    <name type="ordered locus">VC_2144</name>
</gene>
<comment type="function">
    <text>Flagellin is the subunit protein which polymerizes to form the filaments of bacterial flagella. FlaE is not essential for flagellar synthesis and motility.</text>
</comment>
<comment type="subunit">
    <text>Heteromer of multiple flagellin subunits including FlaA, FlaB, FlaC, FlaD and FlaE.</text>
</comment>
<comment type="subcellular location">
    <subcellularLocation>
        <location>Secreted</location>
    </subcellularLocation>
    <subcellularLocation>
        <location>Bacterial flagellum</location>
    </subcellularLocation>
</comment>
<comment type="miscellaneous">
    <text>V.cholerae is able to differentially regulate the flagellins within the flagellum maybe to produce flagella which are particularly suited for motility within a given environment.</text>
</comment>
<comment type="similarity">
    <text evidence="2">Belongs to the bacterial flagellin family.</text>
</comment>
<organism>
    <name type="scientific">Vibrio cholerae serotype O1 (strain ATCC 39315 / El Tor Inaba N16961)</name>
    <dbReference type="NCBI Taxonomy" id="243277"/>
    <lineage>
        <taxon>Bacteria</taxon>
        <taxon>Pseudomonadati</taxon>
        <taxon>Pseudomonadota</taxon>
        <taxon>Gammaproteobacteria</taxon>
        <taxon>Vibrionales</taxon>
        <taxon>Vibrionaceae</taxon>
        <taxon>Vibrio</taxon>
    </lineage>
</organism>
<dbReference type="EMBL" id="AE003852">
    <property type="protein sequence ID" value="AAF95289.1"/>
    <property type="molecule type" value="Genomic_DNA"/>
</dbReference>
<dbReference type="EMBL" id="U25727">
    <property type="protein sequence ID" value="AAC43555.1"/>
    <property type="molecule type" value="Genomic_DNA"/>
</dbReference>
<dbReference type="PIR" id="C82112">
    <property type="entry name" value="C82112"/>
</dbReference>
<dbReference type="PIR" id="S70805">
    <property type="entry name" value="S70805"/>
</dbReference>
<dbReference type="RefSeq" id="NP_231775.1">
    <property type="nucleotide sequence ID" value="NC_002505.1"/>
</dbReference>
<dbReference type="RefSeq" id="WP_001251948.1">
    <property type="nucleotide sequence ID" value="NZ_LT906614.1"/>
</dbReference>
<dbReference type="SMR" id="P0C6C7"/>
<dbReference type="STRING" id="243277.VC_2144"/>
<dbReference type="DNASU" id="2613280"/>
<dbReference type="EnsemblBacteria" id="AAF95289">
    <property type="protein sequence ID" value="AAF95289"/>
    <property type="gene ID" value="VC_2144"/>
</dbReference>
<dbReference type="KEGG" id="vch:VC_2144"/>
<dbReference type="PATRIC" id="fig|243277.26.peg.2049"/>
<dbReference type="eggNOG" id="COG1344">
    <property type="taxonomic scope" value="Bacteria"/>
</dbReference>
<dbReference type="HOGENOM" id="CLU_011142_7_2_6"/>
<dbReference type="Proteomes" id="UP000000584">
    <property type="component" value="Chromosome 1"/>
</dbReference>
<dbReference type="GO" id="GO:0009288">
    <property type="term" value="C:bacterial-type flagellum"/>
    <property type="evidence" value="ECO:0007669"/>
    <property type="project" value="UniProtKB-SubCell"/>
</dbReference>
<dbReference type="GO" id="GO:0005576">
    <property type="term" value="C:extracellular region"/>
    <property type="evidence" value="ECO:0007669"/>
    <property type="project" value="UniProtKB-SubCell"/>
</dbReference>
<dbReference type="GO" id="GO:0005198">
    <property type="term" value="F:structural molecule activity"/>
    <property type="evidence" value="ECO:0007669"/>
    <property type="project" value="InterPro"/>
</dbReference>
<dbReference type="Gene3D" id="3.30.70.2120">
    <property type="match status" value="1"/>
</dbReference>
<dbReference type="Gene3D" id="1.20.1330.10">
    <property type="entry name" value="f41 fragment of flagellin, N-terminal domain"/>
    <property type="match status" value="1"/>
</dbReference>
<dbReference type="Gene3D" id="6.10.10.10">
    <property type="entry name" value="Flagellar export chaperone, C-terminal domain"/>
    <property type="match status" value="1"/>
</dbReference>
<dbReference type="InterPro" id="IPR001492">
    <property type="entry name" value="Flagellin"/>
</dbReference>
<dbReference type="InterPro" id="IPR046358">
    <property type="entry name" value="Flagellin_C"/>
</dbReference>
<dbReference type="InterPro" id="IPR042187">
    <property type="entry name" value="Flagellin_C_sub2"/>
</dbReference>
<dbReference type="InterPro" id="IPR010810">
    <property type="entry name" value="Flagellin_hook_IN_motif"/>
</dbReference>
<dbReference type="InterPro" id="IPR001029">
    <property type="entry name" value="Flagellin_N"/>
</dbReference>
<dbReference type="NCBIfam" id="NF006466">
    <property type="entry name" value="PRK08869.1-1"/>
    <property type="match status" value="1"/>
</dbReference>
<dbReference type="NCBIfam" id="NF006468">
    <property type="entry name" value="PRK08869.1-3"/>
    <property type="match status" value="1"/>
</dbReference>
<dbReference type="NCBIfam" id="NF006469">
    <property type="entry name" value="PRK08869.1-4"/>
    <property type="match status" value="1"/>
</dbReference>
<dbReference type="PANTHER" id="PTHR42792">
    <property type="entry name" value="FLAGELLIN"/>
    <property type="match status" value="1"/>
</dbReference>
<dbReference type="PANTHER" id="PTHR42792:SF2">
    <property type="entry name" value="FLAGELLIN"/>
    <property type="match status" value="1"/>
</dbReference>
<dbReference type="Pfam" id="PF00700">
    <property type="entry name" value="Flagellin_C"/>
    <property type="match status" value="1"/>
</dbReference>
<dbReference type="Pfam" id="PF07196">
    <property type="entry name" value="Flagellin_IN"/>
    <property type="match status" value="1"/>
</dbReference>
<dbReference type="Pfam" id="PF00669">
    <property type="entry name" value="Flagellin_N"/>
    <property type="match status" value="1"/>
</dbReference>
<dbReference type="PRINTS" id="PR00207">
    <property type="entry name" value="FLAGELLIN"/>
</dbReference>
<dbReference type="SUPFAM" id="SSF64518">
    <property type="entry name" value="Phase 1 flagellin"/>
    <property type="match status" value="1"/>
</dbReference>
<reference key="1">
    <citation type="journal article" date="2000" name="Nature">
        <title>DNA sequence of both chromosomes of the cholera pathogen Vibrio cholerae.</title>
        <authorList>
            <person name="Heidelberg J.F."/>
            <person name="Eisen J.A."/>
            <person name="Nelson W.C."/>
            <person name="Clayton R.A."/>
            <person name="Gwinn M.L."/>
            <person name="Dodson R.J."/>
            <person name="Haft D.H."/>
            <person name="Hickey E.K."/>
            <person name="Peterson J.D."/>
            <person name="Umayam L.A."/>
            <person name="Gill S.R."/>
            <person name="Nelson K.E."/>
            <person name="Read T.D."/>
            <person name="Tettelin H."/>
            <person name="Richardson D.L."/>
            <person name="Ermolaeva M.D."/>
            <person name="Vamathevan J.J."/>
            <person name="Bass S."/>
            <person name="Qin H."/>
            <person name="Dragoi I."/>
            <person name="Sellers P."/>
            <person name="McDonald L.A."/>
            <person name="Utterback T.R."/>
            <person name="Fleischmann R.D."/>
            <person name="Nierman W.C."/>
            <person name="White O."/>
            <person name="Salzberg S.L."/>
            <person name="Smith H.O."/>
            <person name="Colwell R.R."/>
            <person name="Mekalanos J.J."/>
            <person name="Venter J.C."/>
            <person name="Fraser C.M."/>
        </authorList>
    </citation>
    <scope>NUCLEOTIDE SEQUENCE [LARGE SCALE GENOMIC DNA]</scope>
    <source>
        <strain>ATCC 39315 / El Tor Inaba N16961</strain>
    </source>
</reference>
<reference key="2">
    <citation type="journal article" date="1995" name="Mol. Microbiol.">
        <title>Use of recombinase gene fusions to identify Vibrio cholerae genes induced during infection.</title>
        <authorList>
            <person name="Camilli A."/>
            <person name="Mekalanos J.J."/>
        </authorList>
    </citation>
    <scope>NUCLEOTIDE SEQUENCE [GENOMIC DNA] OF 344-378</scope>
</reference>
<sequence>MAMTVNTNVSALVAQRHLNSASEMLNQSLERLSSGNRINSAKDDAAGLQISNRLETQMRGLGIAVRNANDGISIMQTAEGAMQETTQLLQRMRDLSLQSANGSNSAAERVALQEEMAALNDELNRIAETTSFAGRKLLNGQFMKASFQIGASSGEAVQLSLRNMRSDSLEMGGFSYVAAALADKQWQVTKGKQQLNISYVNAQGENENIQIQAKEGDDIEELATYINGKTDKVSASVNEKGQLQLYIAGKETSGTLSFSGSLANELQMNLLGYEAVDNLDISSAGGAQRAVSVIDTALKYVDGHRSELGAMQNRFQHAISNLDNVHENLAASNSRIKDADYAKETTQMIKQQILQQVSTSVLAQAKRQPKFVLFLLRN</sequence>
<accession>P0C6C7</accession>
<accession>Q56603</accession>
<accession>Q9KQ60</accession>
<feature type="chain" id="PRO_0000182652" description="Flagellin E">
    <location>
        <begin position="1"/>
        <end position="378"/>
    </location>
</feature>
<feature type="coiled-coil region" evidence="1">
    <location>
        <begin position="98"/>
        <end position="139"/>
    </location>
</feature>
<feature type="coiled-coil region" evidence="1">
    <location>
        <begin position="311"/>
        <end position="339"/>
    </location>
</feature>
<keyword id="KW-0975">Bacterial flagellum</keyword>
<keyword id="KW-0175">Coiled coil</keyword>
<keyword id="KW-1185">Reference proteome</keyword>
<keyword id="KW-0964">Secreted</keyword>
<protein>
    <recommendedName>
        <fullName>Flagellin E</fullName>
    </recommendedName>
</protein>
<proteinExistence type="inferred from homology"/>